<organism>
    <name type="scientific">Acer opalus</name>
    <name type="common">Italian maple</name>
    <dbReference type="NCBI Taxonomy" id="168567"/>
    <lineage>
        <taxon>Eukaryota</taxon>
        <taxon>Viridiplantae</taxon>
        <taxon>Streptophyta</taxon>
        <taxon>Embryophyta</taxon>
        <taxon>Tracheophyta</taxon>
        <taxon>Spermatophyta</taxon>
        <taxon>Magnoliopsida</taxon>
        <taxon>eudicotyledons</taxon>
        <taxon>Gunneridae</taxon>
        <taxon>Pentapetalae</taxon>
        <taxon>rosids</taxon>
        <taxon>malvids</taxon>
        <taxon>Sapindales</taxon>
        <taxon>Sapindaceae</taxon>
        <taxon>Hippocastanoideae</taxon>
        <taxon>Acereae</taxon>
        <taxon>Acer</taxon>
    </lineage>
</organism>
<sequence>MKEYQIHLELDRSQQHNFLYPLLFREYIYALAHDHGLNRSTIPLENGGYDNKSSSLSVKRLISRTYQRIHLSIYAKDSNPNHFIGHNNKFYSQMISEGFSVIVEIPFSLRLVAFLEGKEKEMAKSHNFQSIHSIFPFFENNFSHLHYVLDVLIPYPIRPEILVRTFRYWVKDASSFHLLRFFLHEYFNLNSLITPKKSNSIFSTSNPRFFLFLYNSHVYEYESIFFFLRNQSSHLRSTSSGPLFERISFYGKVEDLVQVFVNDFQDYLWLFKHPIMHYVRYQGKSVLASKDMPLLMNKWKYYLVNLWQWHFHVWSQPGRIHINHLYKDYIDFLGYLSRGRLNTLVVRSQMLENAFLIDNAMKQFETTVPIIPLIGSLTTARFCNSLGHPISKPTWADSSDSYIIDRFMRICRNLSHYHSGSSKKKSLYRIKYILRVSCVKSLVRKHKSTVRVFLKRLGSEFLEEFFTEEEHVLSLIFPRALFTSRRLYRGRVWYFDIICINDLVNHDKLEIVPN</sequence>
<evidence type="ECO:0000255" key="1">
    <source>
        <dbReference type="HAMAP-Rule" id="MF_01390"/>
    </source>
</evidence>
<reference key="1">
    <citation type="submission" date="2002-03" db="EMBL/GenBank/DDBJ databases">
        <title>Chloroplast DNA variation of Acer campestre, A. monspessulanum and related species in Europe.</title>
        <authorList>
            <person name="Bittkau C."/>
            <person name="Mueller-Starck G."/>
        </authorList>
    </citation>
    <scope>NUCLEOTIDE SEQUENCE [GENOMIC DNA]</scope>
</reference>
<gene>
    <name evidence="1" type="primary">matK</name>
</gene>
<protein>
    <recommendedName>
        <fullName evidence="1">Maturase K</fullName>
    </recommendedName>
    <alternativeName>
        <fullName evidence="1">Intron maturase</fullName>
    </alternativeName>
</protein>
<geneLocation type="chloroplast"/>
<comment type="function">
    <text evidence="1">Usually encoded in the trnK tRNA gene intron. Probably assists in splicing its own and other chloroplast group II introns.</text>
</comment>
<comment type="subcellular location">
    <subcellularLocation>
        <location>Plastid</location>
        <location>Chloroplast</location>
    </subcellularLocation>
</comment>
<comment type="similarity">
    <text evidence="1">Belongs to the intron maturase 2 family. MatK subfamily.</text>
</comment>
<dbReference type="EMBL" id="AJ438787">
    <property type="protein sequence ID" value="CAD27631.1"/>
    <property type="molecule type" value="Genomic_DNA"/>
</dbReference>
<dbReference type="RefSeq" id="YP_010124040.1">
    <property type="nucleotide sequence ID" value="NC_056221.1"/>
</dbReference>
<dbReference type="GeneID" id="65328117"/>
<dbReference type="GO" id="GO:0009507">
    <property type="term" value="C:chloroplast"/>
    <property type="evidence" value="ECO:0007669"/>
    <property type="project" value="UniProtKB-SubCell"/>
</dbReference>
<dbReference type="GO" id="GO:0003723">
    <property type="term" value="F:RNA binding"/>
    <property type="evidence" value="ECO:0007669"/>
    <property type="project" value="UniProtKB-KW"/>
</dbReference>
<dbReference type="GO" id="GO:0006397">
    <property type="term" value="P:mRNA processing"/>
    <property type="evidence" value="ECO:0007669"/>
    <property type="project" value="UniProtKB-KW"/>
</dbReference>
<dbReference type="GO" id="GO:0008380">
    <property type="term" value="P:RNA splicing"/>
    <property type="evidence" value="ECO:0007669"/>
    <property type="project" value="UniProtKB-UniRule"/>
</dbReference>
<dbReference type="GO" id="GO:0008033">
    <property type="term" value="P:tRNA processing"/>
    <property type="evidence" value="ECO:0007669"/>
    <property type="project" value="UniProtKB-KW"/>
</dbReference>
<dbReference type="HAMAP" id="MF_01390">
    <property type="entry name" value="MatK"/>
    <property type="match status" value="1"/>
</dbReference>
<dbReference type="InterPro" id="IPR024937">
    <property type="entry name" value="Domain_X"/>
</dbReference>
<dbReference type="InterPro" id="IPR002866">
    <property type="entry name" value="Maturase_MatK"/>
</dbReference>
<dbReference type="InterPro" id="IPR024942">
    <property type="entry name" value="Maturase_MatK_N"/>
</dbReference>
<dbReference type="PANTHER" id="PTHR34811">
    <property type="entry name" value="MATURASE K"/>
    <property type="match status" value="1"/>
</dbReference>
<dbReference type="PANTHER" id="PTHR34811:SF1">
    <property type="entry name" value="MATURASE K"/>
    <property type="match status" value="1"/>
</dbReference>
<dbReference type="Pfam" id="PF01348">
    <property type="entry name" value="Intron_maturas2"/>
    <property type="match status" value="1"/>
</dbReference>
<dbReference type="Pfam" id="PF01824">
    <property type="entry name" value="MatK_N"/>
    <property type="match status" value="1"/>
</dbReference>
<name>MATK_ACEOP</name>
<keyword id="KW-0150">Chloroplast</keyword>
<keyword id="KW-0507">mRNA processing</keyword>
<keyword id="KW-0934">Plastid</keyword>
<keyword id="KW-0694">RNA-binding</keyword>
<keyword id="KW-0819">tRNA processing</keyword>
<feature type="chain" id="PRO_0000143201" description="Maturase K">
    <location>
        <begin position="1"/>
        <end position="514"/>
    </location>
</feature>
<proteinExistence type="inferred from homology"/>
<accession>Q7HKI3</accession>